<reference key="1">
    <citation type="journal article" date="1999" name="Nature">
        <title>Sequence and analysis of chromosome 4 of the plant Arabidopsis thaliana.</title>
        <authorList>
            <person name="Mayer K.F.X."/>
            <person name="Schueller C."/>
            <person name="Wambutt R."/>
            <person name="Murphy G."/>
            <person name="Volckaert G."/>
            <person name="Pohl T."/>
            <person name="Duesterhoeft A."/>
            <person name="Stiekema W."/>
            <person name="Entian K.-D."/>
            <person name="Terryn N."/>
            <person name="Harris B."/>
            <person name="Ansorge W."/>
            <person name="Brandt P."/>
            <person name="Grivell L.A."/>
            <person name="Rieger M."/>
            <person name="Weichselgartner M."/>
            <person name="de Simone V."/>
            <person name="Obermaier B."/>
            <person name="Mache R."/>
            <person name="Mueller M."/>
            <person name="Kreis M."/>
            <person name="Delseny M."/>
            <person name="Puigdomenech P."/>
            <person name="Watson M."/>
            <person name="Schmidtheini T."/>
            <person name="Reichert B."/>
            <person name="Portetelle D."/>
            <person name="Perez-Alonso M."/>
            <person name="Boutry M."/>
            <person name="Bancroft I."/>
            <person name="Vos P."/>
            <person name="Hoheisel J."/>
            <person name="Zimmermann W."/>
            <person name="Wedler H."/>
            <person name="Ridley P."/>
            <person name="Langham S.-A."/>
            <person name="McCullagh B."/>
            <person name="Bilham L."/>
            <person name="Robben J."/>
            <person name="van der Schueren J."/>
            <person name="Grymonprez B."/>
            <person name="Chuang Y.-J."/>
            <person name="Vandenbussche F."/>
            <person name="Braeken M."/>
            <person name="Weltjens I."/>
            <person name="Voet M."/>
            <person name="Bastiaens I."/>
            <person name="Aert R."/>
            <person name="Defoor E."/>
            <person name="Weitzenegger T."/>
            <person name="Bothe G."/>
            <person name="Ramsperger U."/>
            <person name="Hilbert H."/>
            <person name="Braun M."/>
            <person name="Holzer E."/>
            <person name="Brandt A."/>
            <person name="Peters S."/>
            <person name="van Staveren M."/>
            <person name="Dirkse W."/>
            <person name="Mooijman P."/>
            <person name="Klein Lankhorst R."/>
            <person name="Rose M."/>
            <person name="Hauf J."/>
            <person name="Koetter P."/>
            <person name="Berneiser S."/>
            <person name="Hempel S."/>
            <person name="Feldpausch M."/>
            <person name="Lamberth S."/>
            <person name="Van den Daele H."/>
            <person name="De Keyser A."/>
            <person name="Buysshaert C."/>
            <person name="Gielen J."/>
            <person name="Villarroel R."/>
            <person name="De Clercq R."/>
            <person name="van Montagu M."/>
            <person name="Rogers J."/>
            <person name="Cronin A."/>
            <person name="Quail M.A."/>
            <person name="Bray-Allen S."/>
            <person name="Clark L."/>
            <person name="Doggett J."/>
            <person name="Hall S."/>
            <person name="Kay M."/>
            <person name="Lennard N."/>
            <person name="McLay K."/>
            <person name="Mayes R."/>
            <person name="Pettett A."/>
            <person name="Rajandream M.A."/>
            <person name="Lyne M."/>
            <person name="Benes V."/>
            <person name="Rechmann S."/>
            <person name="Borkova D."/>
            <person name="Bloecker H."/>
            <person name="Scharfe M."/>
            <person name="Grimm M."/>
            <person name="Loehnert T.-H."/>
            <person name="Dose S."/>
            <person name="de Haan M."/>
            <person name="Maarse A.C."/>
            <person name="Schaefer M."/>
            <person name="Mueller-Auer S."/>
            <person name="Gabel C."/>
            <person name="Fuchs M."/>
            <person name="Fartmann B."/>
            <person name="Granderath K."/>
            <person name="Dauner D."/>
            <person name="Herzl A."/>
            <person name="Neumann S."/>
            <person name="Argiriou A."/>
            <person name="Vitale D."/>
            <person name="Liguori R."/>
            <person name="Piravandi E."/>
            <person name="Massenet O."/>
            <person name="Quigley F."/>
            <person name="Clabauld G."/>
            <person name="Muendlein A."/>
            <person name="Felber R."/>
            <person name="Schnabl S."/>
            <person name="Hiller R."/>
            <person name="Schmidt W."/>
            <person name="Lecharny A."/>
            <person name="Aubourg S."/>
            <person name="Chefdor F."/>
            <person name="Cooke R."/>
            <person name="Berger C."/>
            <person name="Monfort A."/>
            <person name="Casacuberta E."/>
            <person name="Gibbons T."/>
            <person name="Weber N."/>
            <person name="Vandenbol M."/>
            <person name="Bargues M."/>
            <person name="Terol J."/>
            <person name="Torres A."/>
            <person name="Perez-Perez A."/>
            <person name="Purnelle B."/>
            <person name="Bent E."/>
            <person name="Johnson S."/>
            <person name="Tacon D."/>
            <person name="Jesse T."/>
            <person name="Heijnen L."/>
            <person name="Schwarz S."/>
            <person name="Scholler P."/>
            <person name="Heber S."/>
            <person name="Francs P."/>
            <person name="Bielke C."/>
            <person name="Frishman D."/>
            <person name="Haase D."/>
            <person name="Lemcke K."/>
            <person name="Mewes H.-W."/>
            <person name="Stocker S."/>
            <person name="Zaccaria P."/>
            <person name="Bevan M."/>
            <person name="Wilson R.K."/>
            <person name="de la Bastide M."/>
            <person name="Habermann K."/>
            <person name="Parnell L."/>
            <person name="Dedhia N."/>
            <person name="Gnoj L."/>
            <person name="Schutz K."/>
            <person name="Huang E."/>
            <person name="Spiegel L."/>
            <person name="Sekhon M."/>
            <person name="Murray J."/>
            <person name="Sheet P."/>
            <person name="Cordes M."/>
            <person name="Abu-Threideh J."/>
            <person name="Stoneking T."/>
            <person name="Kalicki J."/>
            <person name="Graves T."/>
            <person name="Harmon G."/>
            <person name="Edwards J."/>
            <person name="Latreille P."/>
            <person name="Courtney L."/>
            <person name="Cloud J."/>
            <person name="Abbott A."/>
            <person name="Scott K."/>
            <person name="Johnson D."/>
            <person name="Minx P."/>
            <person name="Bentley D."/>
            <person name="Fulton B."/>
            <person name="Miller N."/>
            <person name="Greco T."/>
            <person name="Kemp K."/>
            <person name="Kramer J."/>
            <person name="Fulton L."/>
            <person name="Mardis E."/>
            <person name="Dante M."/>
            <person name="Pepin K."/>
            <person name="Hillier L.W."/>
            <person name="Nelson J."/>
            <person name="Spieth J."/>
            <person name="Ryan E."/>
            <person name="Andrews S."/>
            <person name="Geisel C."/>
            <person name="Layman D."/>
            <person name="Du H."/>
            <person name="Ali J."/>
            <person name="Berghoff A."/>
            <person name="Jones K."/>
            <person name="Drone K."/>
            <person name="Cotton M."/>
            <person name="Joshu C."/>
            <person name="Antonoiu B."/>
            <person name="Zidanic M."/>
            <person name="Strong C."/>
            <person name="Sun H."/>
            <person name="Lamar B."/>
            <person name="Yordan C."/>
            <person name="Ma P."/>
            <person name="Zhong J."/>
            <person name="Preston R."/>
            <person name="Vil D."/>
            <person name="Shekher M."/>
            <person name="Matero A."/>
            <person name="Shah R."/>
            <person name="Swaby I.K."/>
            <person name="O'Shaughnessy A."/>
            <person name="Rodriguez M."/>
            <person name="Hoffman J."/>
            <person name="Till S."/>
            <person name="Granat S."/>
            <person name="Shohdy N."/>
            <person name="Hasegawa A."/>
            <person name="Hameed A."/>
            <person name="Lodhi M."/>
            <person name="Johnson A."/>
            <person name="Chen E."/>
            <person name="Marra M.A."/>
            <person name="Martienssen R."/>
            <person name="McCombie W.R."/>
        </authorList>
    </citation>
    <scope>NUCLEOTIDE SEQUENCE [LARGE SCALE GENOMIC DNA]</scope>
    <source>
        <strain>cv. Columbia</strain>
    </source>
</reference>
<reference key="2">
    <citation type="journal article" date="2017" name="Plant J.">
        <title>Araport11: a complete reannotation of the Arabidopsis thaliana reference genome.</title>
        <authorList>
            <person name="Cheng C.Y."/>
            <person name="Krishnakumar V."/>
            <person name="Chan A.P."/>
            <person name="Thibaud-Nissen F."/>
            <person name="Schobel S."/>
            <person name="Town C.D."/>
        </authorList>
    </citation>
    <scope>GENOME REANNOTATION</scope>
    <source>
        <strain>cv. Columbia</strain>
    </source>
</reference>
<reference key="3">
    <citation type="journal article" date="2010" name="Sci. Signal.">
        <title>Signaling from the endoplasmic reticulum activates brassinosteroid signaling and promotes acclimation to stress in Arabidopsis.</title>
        <authorList>
            <person name="Che P."/>
            <person name="Bussell J.D."/>
            <person name="Zhou W."/>
            <person name="Estavillo G.M."/>
            <person name="Pogson B.J."/>
            <person name="Smith S.M."/>
        </authorList>
    </citation>
    <scope>FUNCTION</scope>
    <scope>SUBCELLULAR LOCATION</scope>
    <scope>TISSUE SPECIFICITY</scope>
    <scope>DISRUPTION PHENOTYPE</scope>
</reference>
<evidence type="ECO:0000255" key="1"/>
<evidence type="ECO:0000255" key="2">
    <source>
        <dbReference type="PROSITE-ProRule" id="PRU10095"/>
    </source>
</evidence>
<evidence type="ECO:0000269" key="3">
    <source>
    </source>
</evidence>
<evidence type="ECO:0000305" key="4"/>
<evidence type="ECO:0000305" key="5">
    <source>
    </source>
</evidence>
<evidence type="ECO:0000312" key="6">
    <source>
        <dbReference type="Araport" id="AT4G20310"/>
    </source>
</evidence>
<evidence type="ECO:0000312" key="7">
    <source>
        <dbReference type="EMBL" id="CAA18255.1"/>
    </source>
</evidence>
<gene>
    <name type="primary">S2P</name>
    <name evidence="6" type="ordered locus">At4g20310</name>
    <name evidence="7" type="ORF">F1C12.220</name>
</gene>
<organism>
    <name type="scientific">Arabidopsis thaliana</name>
    <name type="common">Mouse-ear cress</name>
    <dbReference type="NCBI Taxonomy" id="3702"/>
    <lineage>
        <taxon>Eukaryota</taxon>
        <taxon>Viridiplantae</taxon>
        <taxon>Streptophyta</taxon>
        <taxon>Embryophyta</taxon>
        <taxon>Tracheophyta</taxon>
        <taxon>Spermatophyta</taxon>
        <taxon>Magnoliopsida</taxon>
        <taxon>eudicotyledons</taxon>
        <taxon>Gunneridae</taxon>
        <taxon>Pentapetalae</taxon>
        <taxon>rosids</taxon>
        <taxon>malvids</taxon>
        <taxon>Brassicales</taxon>
        <taxon>Brassicaceae</taxon>
        <taxon>Camelineae</taxon>
        <taxon>Arabidopsis</taxon>
    </lineage>
</organism>
<proteinExistence type="evidence at transcript level"/>
<sequence length="513" mass="56824">MEISGRRMRRFRMRFRRDHLTGGENIENEASCCYCDLKISNFNEPIFRLGRRFSGVLKVWFSIGLGFGVASLILVTVFLLLQFHSNPLFSNRLTSAVFGFSPSTRVSLSGIAYVLVSTVITVSVHELGHALAAASEGIQMEYIAVFIAAIFPGGLVAFDNDVLQSLPSFNALRIYCAGIWHNAVFCALCVFALFLLPVMLSPFYKHGESLTVVDVPSVSPLFGYLSPGDVIVSLDGIQVHKPSEWLELAAILDKENSKTSNGSLYLGGSRRFHHGKGYCVPISLIEEGYKGKMVENQFVCPGDLTAFRTMPCSNAAIREVSVCLDAKDIVKLQKCGDGWVTTSDTDNQSDCVCPQGDLCLQAMQSPGVLWTEITYKRTSSQDCSRLGLDFNTSNCLGTFVFVGDLIAMSHSVHLTAYQPRWLFNFFGKSFPNILERSLTCTFHVSLALVLLNSLPVYYLDGESILESSLQSFTWLSPRKKKKALQVCLVGGSLLSFLAFFRIFLLGLPLSRRW</sequence>
<protein>
    <recommendedName>
        <fullName>Membrane-bound transcription factor site-2 protease homolog</fullName>
        <ecNumber>3.4.24.-</ecNumber>
    </recommendedName>
    <alternativeName>
        <fullName>Endopeptidase S2P</fullName>
    </alternativeName>
</protein>
<keyword id="KW-0025">Alternative splicing</keyword>
<keyword id="KW-0333">Golgi apparatus</keyword>
<keyword id="KW-0378">Hydrolase</keyword>
<keyword id="KW-0472">Membrane</keyword>
<keyword id="KW-0479">Metal-binding</keyword>
<keyword id="KW-0482">Metalloprotease</keyword>
<keyword id="KW-0645">Protease</keyword>
<keyword id="KW-1185">Reference proteome</keyword>
<keyword id="KW-0812">Transmembrane</keyword>
<keyword id="KW-1133">Transmembrane helix</keyword>
<keyword id="KW-0862">Zinc</keyword>
<comment type="function">
    <text evidence="3">Metalloprotease that catalyzes the second step (site-2 cleavage) in the proteolytic activation of various factors, after site-1 cleavage. Part of a regulated intramembrane proteolysis (RIP) cascade. After ER stress, cleaves BZIP17 and BZIP28 proteins which function as stress sensors and transducers in ER stress signaling pathway. The N-terminal bZIP component is translocated to the nucleus, where it activates the expression and production of ER chaperones, as well as proteins involved in brassinosteroid (BR) signaling, which is required for stress acclimation and growth.</text>
</comment>
<comment type="cofactor">
    <cofactor evidence="4">
        <name>Zn(2+)</name>
        <dbReference type="ChEBI" id="CHEBI:29105"/>
    </cofactor>
</comment>
<comment type="subcellular location">
    <subcellularLocation>
        <location evidence="5">Golgi apparatus membrane</location>
        <topology evidence="1">Multi-pass membrane protein</topology>
    </subcellularLocation>
</comment>
<comment type="alternative products">
    <event type="alternative splicing"/>
    <isoform>
        <id>F4JUU5-1</id>
        <name>1</name>
        <sequence type="displayed"/>
    </isoform>
    <text evidence="4">A number of isoforms are produced. According to EST sequences.</text>
</comment>
<comment type="tissue specificity">
    <text evidence="3">Expressed in the vasculature of roots, cotyledons and leaves.</text>
</comment>
<comment type="disruption phenotype">
    <text evidence="3">Short root and increased root branching. Mutant plants have increased sensitivity to salt-induced osmotic stress and tunicamycin.</text>
</comment>
<comment type="similarity">
    <text evidence="4">Belongs to the peptidase M50A family.</text>
</comment>
<comment type="sequence caution" evidence="4">
    <conflict type="erroneous gene model prediction">
        <sequence resource="EMBL-CDS" id="CAA18255"/>
    </conflict>
</comment>
<comment type="sequence caution" evidence="4">
    <conflict type="erroneous gene model prediction">
        <sequence resource="EMBL-CDS" id="CAB79031"/>
    </conflict>
</comment>
<accession>F4JUU5</accession>
<accession>O65444</accession>
<feature type="chain" id="PRO_0000431970" description="Membrane-bound transcription factor site-2 protease homolog">
    <location>
        <begin position="1"/>
        <end position="513"/>
    </location>
</feature>
<feature type="topological domain" description="Cytoplasmic" evidence="4">
    <location>
        <begin position="1"/>
        <end position="60"/>
    </location>
</feature>
<feature type="transmembrane region" description="Helical; Name=1" evidence="1">
    <location>
        <begin position="61"/>
        <end position="81"/>
    </location>
</feature>
<feature type="topological domain" description="Lumenal" evidence="4">
    <location>
        <begin position="82"/>
        <end position="107"/>
    </location>
</feature>
<feature type="transmembrane region" description="Helical; Name=2" evidence="1">
    <location>
        <begin position="108"/>
        <end position="128"/>
    </location>
</feature>
<feature type="topological domain" description="Cytoplasmic" evidence="4">
    <location>
        <begin position="129"/>
        <end position="137"/>
    </location>
</feature>
<feature type="transmembrane region" description="Helical; Name=3" evidence="1">
    <location>
        <begin position="138"/>
        <end position="158"/>
    </location>
</feature>
<feature type="topological domain" description="Lumenal" evidence="4">
    <location>
        <begin position="159"/>
        <end position="182"/>
    </location>
</feature>
<feature type="transmembrane region" description="Helical; Name=4" evidence="1">
    <location>
        <begin position="183"/>
        <end position="203"/>
    </location>
</feature>
<feature type="topological domain" description="Cytoplasmic" evidence="4">
    <location>
        <begin position="204"/>
        <end position="437"/>
    </location>
</feature>
<feature type="transmembrane region" description="Helical; Name=5" evidence="1">
    <location>
        <begin position="438"/>
        <end position="458"/>
    </location>
</feature>
<feature type="topological domain" description="Lumenal" evidence="4">
    <location>
        <begin position="459"/>
        <end position="485"/>
    </location>
</feature>
<feature type="transmembrane region" description="Helical; Name=6" evidence="1">
    <location>
        <begin position="486"/>
        <end position="506"/>
    </location>
</feature>
<feature type="topological domain" description="Cytoplasmic" evidence="4">
    <location>
        <begin position="507"/>
        <end position="513"/>
    </location>
</feature>
<feature type="active site" evidence="2">
    <location>
        <position position="126"/>
    </location>
</feature>
<feature type="binding site" evidence="2">
    <location>
        <position position="125"/>
    </location>
    <ligand>
        <name>Zn(2+)</name>
        <dbReference type="ChEBI" id="CHEBI:29105"/>
        <note>catalytic</note>
    </ligand>
</feature>
<feature type="binding site" evidence="2">
    <location>
        <position position="129"/>
    </location>
    <ligand>
        <name>Zn(2+)</name>
        <dbReference type="ChEBI" id="CHEBI:29105"/>
        <note>catalytic</note>
    </ligand>
</feature>
<dbReference type="EC" id="3.4.24.-"/>
<dbReference type="EMBL" id="AL022224">
    <property type="protein sequence ID" value="CAA18255.1"/>
    <property type="status" value="ALT_SEQ"/>
    <property type="molecule type" value="Genomic_DNA"/>
</dbReference>
<dbReference type="EMBL" id="AL161552">
    <property type="protein sequence ID" value="CAB79031.1"/>
    <property type="status" value="ALT_SEQ"/>
    <property type="molecule type" value="Genomic_DNA"/>
</dbReference>
<dbReference type="EMBL" id="CP002687">
    <property type="protein sequence ID" value="ANM67075.1"/>
    <property type="molecule type" value="Genomic_DNA"/>
</dbReference>
<dbReference type="PIR" id="T05339">
    <property type="entry name" value="T05339"/>
</dbReference>
<dbReference type="RefSeq" id="NP_001328927.1">
    <molecule id="F4JUU5-1"/>
    <property type="nucleotide sequence ID" value="NM_001341413.1"/>
</dbReference>
<dbReference type="FunCoup" id="F4JUU5">
    <property type="interactions" value="2745"/>
</dbReference>
<dbReference type="STRING" id="3702.F4JUU5"/>
<dbReference type="MEROPS" id="M50.009"/>
<dbReference type="PaxDb" id="3702-AT4G20310.2"/>
<dbReference type="EnsemblPlants" id="AT4G20310.4">
    <molecule id="F4JUU5-1"/>
    <property type="protein sequence ID" value="AT4G20310.4"/>
    <property type="gene ID" value="AT4G20310"/>
</dbReference>
<dbReference type="GeneID" id="827778"/>
<dbReference type="Gramene" id="AT4G20310.4">
    <molecule id="F4JUU5-1"/>
    <property type="protein sequence ID" value="AT4G20310.4"/>
    <property type="gene ID" value="AT4G20310"/>
</dbReference>
<dbReference type="KEGG" id="ath:AT4G20310"/>
<dbReference type="Araport" id="AT4G20310"/>
<dbReference type="TAIR" id="AT4G20310">
    <property type="gene designation" value="S2P"/>
</dbReference>
<dbReference type="eggNOG" id="KOG2921">
    <property type="taxonomic scope" value="Eukaryota"/>
</dbReference>
<dbReference type="InParanoid" id="F4JUU5"/>
<dbReference type="OMA" id="FYSWGRW"/>
<dbReference type="BRENDA" id="3.4.24.85">
    <property type="organism ID" value="399"/>
</dbReference>
<dbReference type="PRO" id="PR:F4JUU5"/>
<dbReference type="Proteomes" id="UP000006548">
    <property type="component" value="Chromosome 4"/>
</dbReference>
<dbReference type="ExpressionAtlas" id="F4JUU5">
    <property type="expression patterns" value="baseline and differential"/>
</dbReference>
<dbReference type="GO" id="GO:0000139">
    <property type="term" value="C:Golgi membrane"/>
    <property type="evidence" value="ECO:0000314"/>
    <property type="project" value="UniProtKB"/>
</dbReference>
<dbReference type="GO" id="GO:0046872">
    <property type="term" value="F:metal ion binding"/>
    <property type="evidence" value="ECO:0007669"/>
    <property type="project" value="UniProtKB-KW"/>
</dbReference>
<dbReference type="GO" id="GO:0004222">
    <property type="term" value="F:metalloendopeptidase activity"/>
    <property type="evidence" value="ECO:0000314"/>
    <property type="project" value="UniProtKB"/>
</dbReference>
<dbReference type="GO" id="GO:0071475">
    <property type="term" value="P:cellular hyperosmotic salinity response"/>
    <property type="evidence" value="ECO:0000315"/>
    <property type="project" value="UniProtKB"/>
</dbReference>
<dbReference type="GO" id="GO:0006508">
    <property type="term" value="P:proteolysis"/>
    <property type="evidence" value="ECO:0000314"/>
    <property type="project" value="UniProtKB"/>
</dbReference>
<dbReference type="GO" id="GO:1900457">
    <property type="term" value="P:regulation of brassinosteroid mediated signaling pathway"/>
    <property type="evidence" value="ECO:0000315"/>
    <property type="project" value="TAIR"/>
</dbReference>
<dbReference type="GO" id="GO:1905897">
    <property type="term" value="P:regulation of response to endoplasmic reticulum stress"/>
    <property type="evidence" value="ECO:0000315"/>
    <property type="project" value="TAIR"/>
</dbReference>
<dbReference type="GO" id="GO:0009651">
    <property type="term" value="P:response to salt stress"/>
    <property type="evidence" value="ECO:0000315"/>
    <property type="project" value="TAIR"/>
</dbReference>
<dbReference type="InterPro" id="IPR001193">
    <property type="entry name" value="MBTPS2"/>
</dbReference>
<dbReference type="InterPro" id="IPR008915">
    <property type="entry name" value="Peptidase_M50"/>
</dbReference>
<dbReference type="PANTHER" id="PTHR13325:SF3">
    <property type="entry name" value="MEMBRANE-BOUND TRANSCRIPTION FACTOR SITE-2 PROTEASE"/>
    <property type="match status" value="1"/>
</dbReference>
<dbReference type="PANTHER" id="PTHR13325">
    <property type="entry name" value="PROTEASE M50 MEMBRANE-BOUND TRANSCRIPTION FACTOR SITE 2 PROTEASE"/>
    <property type="match status" value="1"/>
</dbReference>
<dbReference type="Pfam" id="PF02163">
    <property type="entry name" value="Peptidase_M50"/>
    <property type="match status" value="1"/>
</dbReference>
<dbReference type="PRINTS" id="PR01000">
    <property type="entry name" value="SREBPS2PTASE"/>
</dbReference>
<dbReference type="PROSITE" id="PS00142">
    <property type="entry name" value="ZINC_PROTEASE"/>
    <property type="match status" value="1"/>
</dbReference>
<name>S2P_ARATH</name>